<keyword id="KW-0106">Calcium</keyword>
<keyword id="KW-1003">Cell membrane</keyword>
<keyword id="KW-0963">Cytoplasm</keyword>
<keyword id="KW-0449">Lipoprotein</keyword>
<keyword id="KW-0472">Membrane</keyword>
<keyword id="KW-0479">Metal-binding</keyword>
<keyword id="KW-0519">Myristate</keyword>
<keyword id="KW-1185">Reference proteome</keyword>
<keyword id="KW-0879">Wnt signaling pathway</keyword>
<sequence length="440" mass="49971">MGKLHSKHAAICKARESPEGDSFVVNACLARKGLDDWMVKQKYYCSSSRVDQRDCQQKNNCELSPRDPLDEGYAEGISDEHYRLEVALPPEKTDSCSVEERMQGTEGSATVGPHKQLQFEELECAVSVEEDNRQEWTFTLYDFDNNGKVTREDITSLLHTIYEVVDASVNHSPSSSKTLRVKLSVAPDSSQRWKNCTQTNTDTPNPKHKGEKCIEDSKTSEKKSRAFLRRYHAEHHSQQGCQRHCVDENLERRNHYLDLAGIENYTSRFGTAAPATEPAKPTHATRSSNQSRSRSQEPENGQVHPAHHRRSQTMSTDPPAILTRHTHALRSPKTHRTPPTQASAGRVMRRGAPPPPSVPNQTPPHQSSGPYRRHKQRPKEALHYRALGPSVTSGPVLEKEHVRDLPSLVLYEGGLAQVVQRHEHHHHHEHHHHYHHFYQS</sequence>
<protein>
    <recommendedName>
        <fullName>Protein naked cuticle homolog 1</fullName>
        <shortName>Naked-1</shortName>
    </recommendedName>
</protein>
<accession>Q2TJA6</accession>
<organism>
    <name type="scientific">Danio rerio</name>
    <name type="common">Zebrafish</name>
    <name type="synonym">Brachydanio rerio</name>
    <dbReference type="NCBI Taxonomy" id="7955"/>
    <lineage>
        <taxon>Eukaryota</taxon>
        <taxon>Metazoa</taxon>
        <taxon>Chordata</taxon>
        <taxon>Craniata</taxon>
        <taxon>Vertebrata</taxon>
        <taxon>Euteleostomi</taxon>
        <taxon>Actinopterygii</taxon>
        <taxon>Neopterygii</taxon>
        <taxon>Teleostei</taxon>
        <taxon>Ostariophysi</taxon>
        <taxon>Cypriniformes</taxon>
        <taxon>Danionidae</taxon>
        <taxon>Danioninae</taxon>
        <taxon>Danio</taxon>
    </lineage>
</organism>
<feature type="initiator methionine" description="Removed" evidence="2">
    <location>
        <position position="1"/>
    </location>
</feature>
<feature type="chain" id="PRO_0000301992" description="Protein naked cuticle homolog 1">
    <location>
        <begin position="2"/>
        <end position="440"/>
    </location>
</feature>
<feature type="domain" description="EF-hand" evidence="3">
    <location>
        <begin position="129"/>
        <end position="164"/>
    </location>
</feature>
<feature type="region of interest" description="Disordered" evidence="4">
    <location>
        <begin position="192"/>
        <end position="221"/>
    </location>
</feature>
<feature type="region of interest" description="Disordered" evidence="4">
    <location>
        <begin position="272"/>
        <end position="379"/>
    </location>
</feature>
<feature type="region of interest" description="Disordered" evidence="4">
    <location>
        <begin position="421"/>
        <end position="440"/>
    </location>
</feature>
<feature type="compositionally biased region" description="Polar residues" evidence="4">
    <location>
        <begin position="192"/>
        <end position="204"/>
    </location>
</feature>
<feature type="compositionally biased region" description="Basic and acidic residues" evidence="4">
    <location>
        <begin position="211"/>
        <end position="221"/>
    </location>
</feature>
<feature type="compositionally biased region" description="Low complexity" evidence="4">
    <location>
        <begin position="272"/>
        <end position="293"/>
    </location>
</feature>
<feature type="compositionally biased region" description="Basic residues" evidence="4">
    <location>
        <begin position="324"/>
        <end position="336"/>
    </location>
</feature>
<feature type="compositionally biased region" description="Pro residues" evidence="4">
    <location>
        <begin position="352"/>
        <end position="362"/>
    </location>
</feature>
<feature type="compositionally biased region" description="Basic residues" evidence="4">
    <location>
        <begin position="422"/>
        <end position="440"/>
    </location>
</feature>
<feature type="binding site" evidence="3">
    <location>
        <position position="142"/>
    </location>
    <ligand>
        <name>Ca(2+)</name>
        <dbReference type="ChEBI" id="CHEBI:29108"/>
    </ligand>
</feature>
<feature type="binding site" evidence="3">
    <location>
        <position position="144"/>
    </location>
    <ligand>
        <name>Ca(2+)</name>
        <dbReference type="ChEBI" id="CHEBI:29108"/>
    </ligand>
</feature>
<feature type="binding site" evidence="3">
    <location>
        <position position="146"/>
    </location>
    <ligand>
        <name>Ca(2+)</name>
        <dbReference type="ChEBI" id="CHEBI:29108"/>
    </ligand>
</feature>
<feature type="binding site" evidence="3">
    <location>
        <position position="148"/>
    </location>
    <ligand>
        <name>Ca(2+)</name>
        <dbReference type="ChEBI" id="CHEBI:29108"/>
    </ligand>
</feature>
<feature type="binding site" evidence="3">
    <location>
        <position position="153"/>
    </location>
    <ligand>
        <name>Ca(2+)</name>
        <dbReference type="ChEBI" id="CHEBI:29108"/>
    </ligand>
</feature>
<feature type="lipid moiety-binding region" description="N-myristoyl glycine" evidence="2">
    <location>
        <position position="2"/>
    </location>
</feature>
<evidence type="ECO:0000250" key="1"/>
<evidence type="ECO:0000255" key="2"/>
<evidence type="ECO:0000255" key="3">
    <source>
        <dbReference type="PROSITE-ProRule" id="PRU00448"/>
    </source>
</evidence>
<evidence type="ECO:0000256" key="4">
    <source>
        <dbReference type="SAM" id="MobiDB-lite"/>
    </source>
</evidence>
<evidence type="ECO:0000305" key="5"/>
<reference key="1">
    <citation type="submission" date="2004-12" db="EMBL/GenBank/DDBJ databases">
        <title>Zebrafish Naked 1 homolog.</title>
        <authorList>
            <person name="Van Raay T.J."/>
            <person name="Coffey R.J."/>
            <person name="Solnica-Krezel L."/>
        </authorList>
    </citation>
    <scope>NUCLEOTIDE SEQUENCE [MRNA]</scope>
</reference>
<dbReference type="EMBL" id="AY863053">
    <property type="protein sequence ID" value="AAX55756.1"/>
    <property type="molecule type" value="mRNA"/>
</dbReference>
<dbReference type="RefSeq" id="NP_001036798.1">
    <property type="nucleotide sequence ID" value="NM_001043333.1"/>
</dbReference>
<dbReference type="FunCoup" id="Q2TJA6">
    <property type="interactions" value="1480"/>
</dbReference>
<dbReference type="STRING" id="7955.ENSDARP00000142757"/>
<dbReference type="PaxDb" id="7955-ENSDARP00000052378"/>
<dbReference type="Ensembl" id="ENSDART00000173523">
    <property type="protein sequence ID" value="ENSDARP00000142757"/>
    <property type="gene ID" value="ENSDARG00000020053"/>
</dbReference>
<dbReference type="GeneID" id="751108"/>
<dbReference type="KEGG" id="dre:751108"/>
<dbReference type="AGR" id="ZFIN:ZDB-GENE-061108-3"/>
<dbReference type="CTD" id="85407"/>
<dbReference type="ZFIN" id="ZDB-GENE-061108-3">
    <property type="gene designation" value="nkd1"/>
</dbReference>
<dbReference type="eggNOG" id="ENOG502QT1X">
    <property type="taxonomic scope" value="Eukaryota"/>
</dbReference>
<dbReference type="HOGENOM" id="CLU_035610_1_0_1"/>
<dbReference type="InParanoid" id="Q2TJA6"/>
<dbReference type="OMA" id="KETHQLC"/>
<dbReference type="OrthoDB" id="5953812at2759"/>
<dbReference type="PhylomeDB" id="Q2TJA6"/>
<dbReference type="TreeFam" id="TF328786"/>
<dbReference type="PRO" id="PR:Q2TJA6"/>
<dbReference type="Proteomes" id="UP000000437">
    <property type="component" value="Chromosome 7"/>
</dbReference>
<dbReference type="Bgee" id="ENSDARG00000020053">
    <property type="expression patterns" value="Expressed in intestine and 45 other cell types or tissues"/>
</dbReference>
<dbReference type="ExpressionAtlas" id="Q2TJA6">
    <property type="expression patterns" value="baseline and differential"/>
</dbReference>
<dbReference type="GO" id="GO:0005737">
    <property type="term" value="C:cytoplasm"/>
    <property type="evidence" value="ECO:0000314"/>
    <property type="project" value="ZFIN"/>
</dbReference>
<dbReference type="GO" id="GO:0005886">
    <property type="term" value="C:plasma membrane"/>
    <property type="evidence" value="ECO:0000314"/>
    <property type="project" value="ZFIN"/>
</dbReference>
<dbReference type="GO" id="GO:0005509">
    <property type="term" value="F:calcium ion binding"/>
    <property type="evidence" value="ECO:0007669"/>
    <property type="project" value="InterPro"/>
</dbReference>
<dbReference type="GO" id="GO:0060971">
    <property type="term" value="P:embryonic heart tube left/right pattern formation"/>
    <property type="evidence" value="ECO:0000315"/>
    <property type="project" value="ZFIN"/>
</dbReference>
<dbReference type="GO" id="GO:0001754">
    <property type="term" value="P:eye photoreceptor cell differentiation"/>
    <property type="evidence" value="ECO:0007669"/>
    <property type="project" value="Ensembl"/>
</dbReference>
<dbReference type="GO" id="GO:0003146">
    <property type="term" value="P:heart jogging"/>
    <property type="evidence" value="ECO:0000315"/>
    <property type="project" value="ZFIN"/>
</dbReference>
<dbReference type="GO" id="GO:0070121">
    <property type="term" value="P:Kupffer's vesicle development"/>
    <property type="evidence" value="ECO:0000315"/>
    <property type="project" value="ZFIN"/>
</dbReference>
<dbReference type="GO" id="GO:0060972">
    <property type="term" value="P:left/right pattern formation"/>
    <property type="evidence" value="ECO:0000315"/>
    <property type="project" value="ZFIN"/>
</dbReference>
<dbReference type="GO" id="GO:0090090">
    <property type="term" value="P:negative regulation of canonical Wnt signaling pathway"/>
    <property type="evidence" value="ECO:0000314"/>
    <property type="project" value="ZFIN"/>
</dbReference>
<dbReference type="GO" id="GO:0042308">
    <property type="term" value="P:negative regulation of protein import into nucleus"/>
    <property type="evidence" value="ECO:0000314"/>
    <property type="project" value="ZFIN"/>
</dbReference>
<dbReference type="GO" id="GO:0030178">
    <property type="term" value="P:negative regulation of Wnt signaling pathway"/>
    <property type="evidence" value="ECO:0000318"/>
    <property type="project" value="GO_Central"/>
</dbReference>
<dbReference type="GO" id="GO:0001839">
    <property type="term" value="P:neural plate morphogenesis"/>
    <property type="evidence" value="ECO:0000316"/>
    <property type="project" value="ZFIN"/>
</dbReference>
<dbReference type="GO" id="GO:0090249">
    <property type="term" value="P:regulation of cell migration involved in somitogenic axis elongation"/>
    <property type="evidence" value="ECO:0007669"/>
    <property type="project" value="Ensembl"/>
</dbReference>
<dbReference type="GO" id="GO:0007525">
    <property type="term" value="P:somatic muscle development"/>
    <property type="evidence" value="ECO:0007669"/>
    <property type="project" value="Ensembl"/>
</dbReference>
<dbReference type="GO" id="GO:0001756">
    <property type="term" value="P:somitogenesis"/>
    <property type="evidence" value="ECO:0007669"/>
    <property type="project" value="Ensembl"/>
</dbReference>
<dbReference type="GO" id="GO:0060061">
    <property type="term" value="P:Spemann organizer formation"/>
    <property type="evidence" value="ECO:0000315"/>
    <property type="project" value="ZFIN"/>
</dbReference>
<dbReference type="GO" id="GO:0016055">
    <property type="term" value="P:Wnt signaling pathway"/>
    <property type="evidence" value="ECO:0000315"/>
    <property type="project" value="ZFIN"/>
</dbReference>
<dbReference type="FunFam" id="1.10.238.10:FF:000166">
    <property type="entry name" value="Naked cuticle homolog 1 (Drosophila)"/>
    <property type="match status" value="1"/>
</dbReference>
<dbReference type="Gene3D" id="1.10.238.10">
    <property type="entry name" value="EF-hand"/>
    <property type="match status" value="1"/>
</dbReference>
<dbReference type="InterPro" id="IPR011992">
    <property type="entry name" value="EF-hand-dom_pair"/>
</dbReference>
<dbReference type="InterPro" id="IPR018247">
    <property type="entry name" value="EF_Hand_1_Ca_BS"/>
</dbReference>
<dbReference type="InterPro" id="IPR002048">
    <property type="entry name" value="EF_hand_dom"/>
</dbReference>
<dbReference type="InterPro" id="IPR040140">
    <property type="entry name" value="Nkd-like"/>
</dbReference>
<dbReference type="PANTHER" id="PTHR22611">
    <property type="entry name" value="PROTEIN NAKED CUTICLE"/>
    <property type="match status" value="1"/>
</dbReference>
<dbReference type="PANTHER" id="PTHR22611:SF2">
    <property type="entry name" value="PROTEIN NAKED CUTICLE HOMOLOG 1"/>
    <property type="match status" value="1"/>
</dbReference>
<dbReference type="SUPFAM" id="SSF47473">
    <property type="entry name" value="EF-hand"/>
    <property type="match status" value="1"/>
</dbReference>
<dbReference type="PROSITE" id="PS00018">
    <property type="entry name" value="EF_HAND_1"/>
    <property type="match status" value="1"/>
</dbReference>
<dbReference type="PROSITE" id="PS50222">
    <property type="entry name" value="EF_HAND_2"/>
    <property type="match status" value="1"/>
</dbReference>
<proteinExistence type="evidence at transcript level"/>
<name>NKD1_DANRE</name>
<comment type="function">
    <text evidence="1">Cell autonomous antagonist of the canonical Wnt signaling pathway. May activate a second Wnt signaling pathway that controls planar cell polarity (By similarity).</text>
</comment>
<comment type="subcellular location">
    <subcellularLocation>
        <location evidence="1">Cell membrane</location>
    </subcellularLocation>
    <subcellularLocation>
        <location evidence="1">Cytoplasm</location>
    </subcellularLocation>
</comment>
<comment type="similarity">
    <text evidence="5">Belongs to the NKD family.</text>
</comment>
<gene>
    <name type="primary">nkd1</name>
</gene>